<organismHost>
    <name type="scientific">Mycobacterium</name>
    <dbReference type="NCBI Taxonomy" id="1763"/>
</organismHost>
<sequence>MSDTATTEGTPAGDPTPVVTDKPLEPTPKTYDEAYVKELRQEAAAARVAKKDAVEAAVKAANDAHTAELAARDTRITELENELGQAWIRLQKLETSLAAKVPSDKVLAFVDILQGEDADSIAESAKKNLELIGGFDKKPVSGFDPTQGFGGRQELPLNGDPILNAMKGVLGIK</sequence>
<reference key="1">
    <citation type="journal article" date="1998" name="J. Mol. Biol.">
        <title>Genome structure of mycobacteriophage D29: implications for phage evolution.</title>
        <authorList>
            <person name="Ford M.E."/>
            <person name="Sarkis G.J."/>
            <person name="Belanger A.E."/>
            <person name="Hendrix R.W."/>
            <person name="Hatfull G.F."/>
        </authorList>
    </citation>
    <scope>NUCLEOTIDE SEQUENCE [LARGE SCALE GENOMIC DNA]</scope>
</reference>
<reference key="2">
    <citation type="submission" date="2021-06" db="EMBL/GenBank/DDBJ databases">
        <authorList>
            <person name="Ford M.E."/>
            <person name="Sarkis G.J."/>
            <person name="Belanger A.E."/>
            <person name="Hendrix R.W."/>
            <person name="Hatfull G.F."/>
        </authorList>
    </citation>
    <scope>SEQUENCE REVISION TO N-TERMINUS</scope>
</reference>
<protein>
    <recommendedName>
        <fullName>Probable capsid assembly scaffolding protein</fullName>
    </recommendedName>
    <alternativeName>
        <fullName>Gene product 16</fullName>
        <shortName>gp16</shortName>
    </alternativeName>
    <alternativeName>
        <fullName evidence="3">Head morphogenesis protein</fullName>
    </alternativeName>
    <alternativeName>
        <fullName>Scaffold protein</fullName>
    </alternativeName>
</protein>
<feature type="chain" id="PRO_0000164720" description="Probable capsid assembly scaffolding protein">
    <location>
        <begin position="1"/>
        <end position="173"/>
    </location>
</feature>
<feature type="region of interest" description="Disordered" evidence="2">
    <location>
        <begin position="1"/>
        <end position="30"/>
    </location>
</feature>
<feature type="coiled-coil region" evidence="1">
    <location>
        <begin position="36"/>
        <end position="56"/>
    </location>
</feature>
<dbReference type="EMBL" id="AF022214">
    <property type="protein sequence ID" value="AAC18456.2"/>
    <property type="molecule type" value="Genomic_DNA"/>
</dbReference>
<dbReference type="PIR" id="E72801">
    <property type="entry name" value="E72801"/>
</dbReference>
<dbReference type="RefSeq" id="NP_046831.1">
    <property type="nucleotide sequence ID" value="NC_001900.1"/>
</dbReference>
<dbReference type="SMR" id="O64209"/>
<dbReference type="GeneID" id="1261630"/>
<dbReference type="KEGG" id="vg:1261630"/>
<dbReference type="OrthoDB" id="15003at10239"/>
<dbReference type="Proteomes" id="UP000002131">
    <property type="component" value="Segment"/>
</dbReference>
<comment type="function">
    <text evidence="3">Scaffolding protein involved in the icosahedric procapsid assembly. Coassembles with the capsid proteins to form the procapsid, in which the scaffolding protein is found within the external shell of icosahedrally arranged capsid protein subunits.</text>
</comment>
<comment type="similarity">
    <text evidence="3">Belongs to the L5likevirus scaffolding protein family.</text>
</comment>
<accession>O64209</accession>
<proteinExistence type="inferred from homology"/>
<evidence type="ECO:0000255" key="1"/>
<evidence type="ECO:0000256" key="2">
    <source>
        <dbReference type="SAM" id="MobiDB-lite"/>
    </source>
</evidence>
<evidence type="ECO:0000305" key="3"/>
<organism>
    <name type="scientific">Mycobacterium phage D29</name>
    <name type="common">Mycobacteriophage D29</name>
    <dbReference type="NCBI Taxonomy" id="28369"/>
    <lineage>
        <taxon>Viruses</taxon>
        <taxon>Duplodnaviria</taxon>
        <taxon>Heunggongvirae</taxon>
        <taxon>Uroviricota</taxon>
        <taxon>Caudoviricetes</taxon>
        <taxon>Fromanvirus</taxon>
    </lineage>
</organism>
<gene>
    <name type="primary">16</name>
</gene>
<name>SCAF_BPMD2</name>
<keyword id="KW-0175">Coiled coil</keyword>
<keyword id="KW-1185">Reference proteome</keyword>
<keyword id="KW-0118">Viral capsid assembly</keyword>
<keyword id="KW-1188">Viral release from host cell</keyword>